<protein>
    <recommendedName>
        <fullName evidence="1">Holliday junction branch migration complex subunit RuvB</fullName>
        <ecNumber evidence="1">3.6.4.-</ecNumber>
    </recommendedName>
</protein>
<feature type="chain" id="PRO_0000235398" description="Holliday junction branch migration complex subunit RuvB">
    <location>
        <begin position="1"/>
        <end position="350"/>
    </location>
</feature>
<feature type="region of interest" description="Large ATPase domain (RuvB-L)" evidence="1">
    <location>
        <begin position="1"/>
        <end position="186"/>
    </location>
</feature>
<feature type="region of interest" description="Small ATPAse domain (RuvB-S)" evidence="1">
    <location>
        <begin position="187"/>
        <end position="257"/>
    </location>
</feature>
<feature type="region of interest" description="Head domain (RuvB-H)" evidence="1">
    <location>
        <begin position="260"/>
        <end position="350"/>
    </location>
</feature>
<feature type="binding site" evidence="1">
    <location>
        <position position="25"/>
    </location>
    <ligand>
        <name>ATP</name>
        <dbReference type="ChEBI" id="CHEBI:30616"/>
    </ligand>
</feature>
<feature type="binding site" evidence="1">
    <location>
        <position position="26"/>
    </location>
    <ligand>
        <name>ATP</name>
        <dbReference type="ChEBI" id="CHEBI:30616"/>
    </ligand>
</feature>
<feature type="binding site" evidence="1">
    <location>
        <position position="67"/>
    </location>
    <ligand>
        <name>ATP</name>
        <dbReference type="ChEBI" id="CHEBI:30616"/>
    </ligand>
</feature>
<feature type="binding site" evidence="1">
    <location>
        <position position="70"/>
    </location>
    <ligand>
        <name>ATP</name>
        <dbReference type="ChEBI" id="CHEBI:30616"/>
    </ligand>
</feature>
<feature type="binding site" evidence="1">
    <location>
        <position position="71"/>
    </location>
    <ligand>
        <name>ATP</name>
        <dbReference type="ChEBI" id="CHEBI:30616"/>
    </ligand>
</feature>
<feature type="binding site" evidence="1">
    <location>
        <position position="71"/>
    </location>
    <ligand>
        <name>Mg(2+)</name>
        <dbReference type="ChEBI" id="CHEBI:18420"/>
    </ligand>
</feature>
<feature type="binding site" evidence="1">
    <location>
        <position position="72"/>
    </location>
    <ligand>
        <name>ATP</name>
        <dbReference type="ChEBI" id="CHEBI:30616"/>
    </ligand>
</feature>
<feature type="binding site" evidence="1">
    <location>
        <begin position="133"/>
        <end position="135"/>
    </location>
    <ligand>
        <name>ATP</name>
        <dbReference type="ChEBI" id="CHEBI:30616"/>
    </ligand>
</feature>
<feature type="binding site" evidence="1">
    <location>
        <position position="176"/>
    </location>
    <ligand>
        <name>ATP</name>
        <dbReference type="ChEBI" id="CHEBI:30616"/>
    </ligand>
</feature>
<feature type="binding site" evidence="1">
    <location>
        <position position="186"/>
    </location>
    <ligand>
        <name>ATP</name>
        <dbReference type="ChEBI" id="CHEBI:30616"/>
    </ligand>
</feature>
<feature type="binding site" evidence="1">
    <location>
        <position position="223"/>
    </location>
    <ligand>
        <name>ATP</name>
        <dbReference type="ChEBI" id="CHEBI:30616"/>
    </ligand>
</feature>
<feature type="binding site" evidence="1">
    <location>
        <position position="296"/>
    </location>
    <ligand>
        <name>DNA</name>
        <dbReference type="ChEBI" id="CHEBI:16991"/>
    </ligand>
</feature>
<feature type="binding site" evidence="1">
    <location>
        <position position="315"/>
    </location>
    <ligand>
        <name>DNA</name>
        <dbReference type="ChEBI" id="CHEBI:16991"/>
    </ligand>
</feature>
<feature type="binding site" evidence="1">
    <location>
        <position position="320"/>
    </location>
    <ligand>
        <name>DNA</name>
        <dbReference type="ChEBI" id="CHEBI:16991"/>
    </ligand>
</feature>
<proteinExistence type="inferred from homology"/>
<accession>Q2RVF5</accession>
<gene>
    <name evidence="1" type="primary">ruvB</name>
    <name type="ordered locus">Rru_A1089</name>
</gene>
<sequence length="350" mass="38303">MAGHEEEDERLISGRRREGEVDAALRPQSLADFVGQRQTRENLGVFVQAARARGEAMDHVLFHGPPGLGKTTLAQIVARELGVGFRGTSGPMIVKAGDLAAILTNLEPRDVLFIDEIHRLNPAIEEVLYPAMEDFQLDLIIGEGPAARSVRIDLPPFTLVGATTRSGLLTTPLRDRFGIPLRLDFYETDELVQIVTRGSRLLGMALTDEGAREVARRSRGTPRVAGRLLRRVRDFAAVAGRSPVDAFIADAALNRLEVDGRGLDAMDRRYLSRMADHYGGGPVGVDTLAAALAEERDTVEDVIEPYLIQQGFIKRTPRGRMLTAIAWTHLGLTPPAETPPVQPDLWSDAP</sequence>
<dbReference type="EC" id="3.6.4.-" evidence="1"/>
<dbReference type="EMBL" id="CP000230">
    <property type="protein sequence ID" value="ABC21890.1"/>
    <property type="molecule type" value="Genomic_DNA"/>
</dbReference>
<dbReference type="RefSeq" id="WP_011388844.1">
    <property type="nucleotide sequence ID" value="NC_007643.1"/>
</dbReference>
<dbReference type="RefSeq" id="YP_426177.1">
    <property type="nucleotide sequence ID" value="NC_007643.1"/>
</dbReference>
<dbReference type="SMR" id="Q2RVF5"/>
<dbReference type="STRING" id="269796.Rru_A1089"/>
<dbReference type="EnsemblBacteria" id="ABC21890">
    <property type="protein sequence ID" value="ABC21890"/>
    <property type="gene ID" value="Rru_A1089"/>
</dbReference>
<dbReference type="KEGG" id="rru:Rru_A1089"/>
<dbReference type="PATRIC" id="fig|269796.9.peg.1147"/>
<dbReference type="eggNOG" id="COG2255">
    <property type="taxonomic scope" value="Bacteria"/>
</dbReference>
<dbReference type="HOGENOM" id="CLU_055599_1_0_5"/>
<dbReference type="PhylomeDB" id="Q2RVF5"/>
<dbReference type="Proteomes" id="UP000001929">
    <property type="component" value="Chromosome"/>
</dbReference>
<dbReference type="GO" id="GO:0005737">
    <property type="term" value="C:cytoplasm"/>
    <property type="evidence" value="ECO:0007669"/>
    <property type="project" value="UniProtKB-SubCell"/>
</dbReference>
<dbReference type="GO" id="GO:0048476">
    <property type="term" value="C:Holliday junction resolvase complex"/>
    <property type="evidence" value="ECO:0007669"/>
    <property type="project" value="UniProtKB-UniRule"/>
</dbReference>
<dbReference type="GO" id="GO:0005524">
    <property type="term" value="F:ATP binding"/>
    <property type="evidence" value="ECO:0007669"/>
    <property type="project" value="UniProtKB-UniRule"/>
</dbReference>
<dbReference type="GO" id="GO:0016887">
    <property type="term" value="F:ATP hydrolysis activity"/>
    <property type="evidence" value="ECO:0007669"/>
    <property type="project" value="InterPro"/>
</dbReference>
<dbReference type="GO" id="GO:0000400">
    <property type="term" value="F:four-way junction DNA binding"/>
    <property type="evidence" value="ECO:0007669"/>
    <property type="project" value="UniProtKB-UniRule"/>
</dbReference>
<dbReference type="GO" id="GO:0009378">
    <property type="term" value="F:four-way junction helicase activity"/>
    <property type="evidence" value="ECO:0007669"/>
    <property type="project" value="InterPro"/>
</dbReference>
<dbReference type="GO" id="GO:0006310">
    <property type="term" value="P:DNA recombination"/>
    <property type="evidence" value="ECO:0007669"/>
    <property type="project" value="UniProtKB-UniRule"/>
</dbReference>
<dbReference type="GO" id="GO:0006281">
    <property type="term" value="P:DNA repair"/>
    <property type="evidence" value="ECO:0007669"/>
    <property type="project" value="UniProtKB-UniRule"/>
</dbReference>
<dbReference type="CDD" id="cd00009">
    <property type="entry name" value="AAA"/>
    <property type="match status" value="1"/>
</dbReference>
<dbReference type="FunFam" id="1.10.10.10:FF:000086">
    <property type="entry name" value="Holliday junction ATP-dependent DNA helicase RuvB"/>
    <property type="match status" value="1"/>
</dbReference>
<dbReference type="Gene3D" id="1.10.8.60">
    <property type="match status" value="1"/>
</dbReference>
<dbReference type="Gene3D" id="3.40.50.300">
    <property type="entry name" value="P-loop containing nucleotide triphosphate hydrolases"/>
    <property type="match status" value="1"/>
</dbReference>
<dbReference type="Gene3D" id="1.10.10.10">
    <property type="entry name" value="Winged helix-like DNA-binding domain superfamily/Winged helix DNA-binding domain"/>
    <property type="match status" value="1"/>
</dbReference>
<dbReference type="HAMAP" id="MF_00016">
    <property type="entry name" value="DNA_HJ_migration_RuvB"/>
    <property type="match status" value="1"/>
</dbReference>
<dbReference type="InterPro" id="IPR003593">
    <property type="entry name" value="AAA+_ATPase"/>
</dbReference>
<dbReference type="InterPro" id="IPR041445">
    <property type="entry name" value="AAA_lid_4"/>
</dbReference>
<dbReference type="InterPro" id="IPR004605">
    <property type="entry name" value="DNA_helicase_Holl-junc_RuvB"/>
</dbReference>
<dbReference type="InterPro" id="IPR027417">
    <property type="entry name" value="P-loop_NTPase"/>
</dbReference>
<dbReference type="InterPro" id="IPR008824">
    <property type="entry name" value="RuvB-like_N"/>
</dbReference>
<dbReference type="InterPro" id="IPR008823">
    <property type="entry name" value="RuvB_C"/>
</dbReference>
<dbReference type="InterPro" id="IPR036388">
    <property type="entry name" value="WH-like_DNA-bd_sf"/>
</dbReference>
<dbReference type="InterPro" id="IPR036390">
    <property type="entry name" value="WH_DNA-bd_sf"/>
</dbReference>
<dbReference type="NCBIfam" id="NF000868">
    <property type="entry name" value="PRK00080.1"/>
    <property type="match status" value="1"/>
</dbReference>
<dbReference type="NCBIfam" id="TIGR00635">
    <property type="entry name" value="ruvB"/>
    <property type="match status" value="1"/>
</dbReference>
<dbReference type="PANTHER" id="PTHR42848">
    <property type="match status" value="1"/>
</dbReference>
<dbReference type="PANTHER" id="PTHR42848:SF1">
    <property type="entry name" value="HOLLIDAY JUNCTION BRANCH MIGRATION COMPLEX SUBUNIT RUVB"/>
    <property type="match status" value="1"/>
</dbReference>
<dbReference type="Pfam" id="PF17864">
    <property type="entry name" value="AAA_lid_4"/>
    <property type="match status" value="1"/>
</dbReference>
<dbReference type="Pfam" id="PF05491">
    <property type="entry name" value="RuvB_C"/>
    <property type="match status" value="1"/>
</dbReference>
<dbReference type="Pfam" id="PF05496">
    <property type="entry name" value="RuvB_N"/>
    <property type="match status" value="1"/>
</dbReference>
<dbReference type="SMART" id="SM00382">
    <property type="entry name" value="AAA"/>
    <property type="match status" value="1"/>
</dbReference>
<dbReference type="SUPFAM" id="SSF52540">
    <property type="entry name" value="P-loop containing nucleoside triphosphate hydrolases"/>
    <property type="match status" value="1"/>
</dbReference>
<dbReference type="SUPFAM" id="SSF46785">
    <property type="entry name" value="Winged helix' DNA-binding domain"/>
    <property type="match status" value="1"/>
</dbReference>
<reference key="1">
    <citation type="journal article" date="2011" name="Stand. Genomic Sci.">
        <title>Complete genome sequence of Rhodospirillum rubrum type strain (S1).</title>
        <authorList>
            <person name="Munk A.C."/>
            <person name="Copeland A."/>
            <person name="Lucas S."/>
            <person name="Lapidus A."/>
            <person name="Del Rio T.G."/>
            <person name="Barry K."/>
            <person name="Detter J.C."/>
            <person name="Hammon N."/>
            <person name="Israni S."/>
            <person name="Pitluck S."/>
            <person name="Brettin T."/>
            <person name="Bruce D."/>
            <person name="Han C."/>
            <person name="Tapia R."/>
            <person name="Gilna P."/>
            <person name="Schmutz J."/>
            <person name="Larimer F."/>
            <person name="Land M."/>
            <person name="Kyrpides N.C."/>
            <person name="Mavromatis K."/>
            <person name="Richardson P."/>
            <person name="Rohde M."/>
            <person name="Goeker M."/>
            <person name="Klenk H.P."/>
            <person name="Zhang Y."/>
            <person name="Roberts G.P."/>
            <person name="Reslewic S."/>
            <person name="Schwartz D.C."/>
        </authorList>
    </citation>
    <scope>NUCLEOTIDE SEQUENCE [LARGE SCALE GENOMIC DNA]</scope>
    <source>
        <strain>ATCC 11170 / ATH 1.1.1 / DSM 467 / LMG 4362 / NCIMB 8255 / S1</strain>
    </source>
</reference>
<comment type="function">
    <text evidence="1">The RuvA-RuvB-RuvC complex processes Holliday junction (HJ) DNA during genetic recombination and DNA repair, while the RuvA-RuvB complex plays an important role in the rescue of blocked DNA replication forks via replication fork reversal (RFR). RuvA specifically binds to HJ cruciform DNA, conferring on it an open structure. The RuvB hexamer acts as an ATP-dependent pump, pulling dsDNA into and through the RuvAB complex. RuvB forms 2 homohexamers on either side of HJ DNA bound by 1 or 2 RuvA tetramers; 4 subunits per hexamer contact DNA at a time. Coordinated motions by a converter formed by DNA-disengaged RuvB subunits stimulates ATP hydrolysis and nucleotide exchange. Immobilization of the converter enables RuvB to convert the ATP-contained energy into a lever motion, pulling 2 nucleotides of DNA out of the RuvA tetramer per ATP hydrolyzed, thus driving DNA branch migration. The RuvB motors rotate together with the DNA substrate, which together with the progressing nucleotide cycle form the mechanistic basis for DNA recombination by continuous HJ branch migration. Branch migration allows RuvC to scan DNA until it finds its consensus sequence, where it cleaves and resolves cruciform DNA.</text>
</comment>
<comment type="catalytic activity">
    <reaction evidence="1">
        <text>ATP + H2O = ADP + phosphate + H(+)</text>
        <dbReference type="Rhea" id="RHEA:13065"/>
        <dbReference type="ChEBI" id="CHEBI:15377"/>
        <dbReference type="ChEBI" id="CHEBI:15378"/>
        <dbReference type="ChEBI" id="CHEBI:30616"/>
        <dbReference type="ChEBI" id="CHEBI:43474"/>
        <dbReference type="ChEBI" id="CHEBI:456216"/>
    </reaction>
</comment>
<comment type="subunit">
    <text evidence="1">Homohexamer. Forms an RuvA(8)-RuvB(12)-Holliday junction (HJ) complex. HJ DNA is sandwiched between 2 RuvA tetramers; dsDNA enters through RuvA and exits via RuvB. An RuvB hexamer assembles on each DNA strand where it exits the tetramer. Each RuvB hexamer is contacted by two RuvA subunits (via domain III) on 2 adjacent RuvB subunits; this complex drives branch migration. In the full resolvosome a probable DNA-RuvA(4)-RuvB(12)-RuvC(2) complex forms which resolves the HJ.</text>
</comment>
<comment type="subcellular location">
    <subcellularLocation>
        <location evidence="1">Cytoplasm</location>
    </subcellularLocation>
</comment>
<comment type="domain">
    <text evidence="1">Has 3 domains, the large (RuvB-L) and small ATPase (RuvB-S) domains and the C-terminal head (RuvB-H) domain. The head domain binds DNA, while the ATPase domains jointly bind ATP, ADP or are empty depending on the state of the subunit in the translocation cycle. During a single DNA translocation step the structure of each domain remains the same, but their relative positions change.</text>
</comment>
<comment type="similarity">
    <text evidence="1">Belongs to the RuvB family.</text>
</comment>
<evidence type="ECO:0000255" key="1">
    <source>
        <dbReference type="HAMAP-Rule" id="MF_00016"/>
    </source>
</evidence>
<organism>
    <name type="scientific">Rhodospirillum rubrum (strain ATCC 11170 / ATH 1.1.1 / DSM 467 / LMG 4362 / NCIMB 8255 / S1)</name>
    <dbReference type="NCBI Taxonomy" id="269796"/>
    <lineage>
        <taxon>Bacteria</taxon>
        <taxon>Pseudomonadati</taxon>
        <taxon>Pseudomonadota</taxon>
        <taxon>Alphaproteobacteria</taxon>
        <taxon>Rhodospirillales</taxon>
        <taxon>Rhodospirillaceae</taxon>
        <taxon>Rhodospirillum</taxon>
    </lineage>
</organism>
<keyword id="KW-0067">ATP-binding</keyword>
<keyword id="KW-0963">Cytoplasm</keyword>
<keyword id="KW-0227">DNA damage</keyword>
<keyword id="KW-0233">DNA recombination</keyword>
<keyword id="KW-0234">DNA repair</keyword>
<keyword id="KW-0238">DNA-binding</keyword>
<keyword id="KW-0378">Hydrolase</keyword>
<keyword id="KW-0547">Nucleotide-binding</keyword>
<keyword id="KW-1185">Reference proteome</keyword>
<name>RUVB_RHORT</name>